<reference key="1">
    <citation type="journal article" date="2010" name="Genome Biol. Evol.">
        <title>Continuing evolution of Burkholderia mallei through genome reduction and large-scale rearrangements.</title>
        <authorList>
            <person name="Losada L."/>
            <person name="Ronning C.M."/>
            <person name="DeShazer D."/>
            <person name="Woods D."/>
            <person name="Fedorova N."/>
            <person name="Kim H.S."/>
            <person name="Shabalina S.A."/>
            <person name="Pearson T.R."/>
            <person name="Brinkac L."/>
            <person name="Tan P."/>
            <person name="Nandi T."/>
            <person name="Crabtree J."/>
            <person name="Badger J."/>
            <person name="Beckstrom-Sternberg S."/>
            <person name="Saqib M."/>
            <person name="Schutzer S.E."/>
            <person name="Keim P."/>
            <person name="Nierman W.C."/>
        </authorList>
    </citation>
    <scope>NUCLEOTIDE SEQUENCE [LARGE SCALE GENOMIC DNA]</scope>
    <source>
        <strain>1710b</strain>
    </source>
</reference>
<sequence length="368" mass="38940">MTVKLTIDCMGGDHGPSVTVPAAVKFVRSHPDAHLMLVGIESAIRAQLKKCKALGEPALSVVPATEVVAMDDPVEVALRKKKDSSMRVALNHVKEGAAQACISAGNTGALMAVSRYVLKTLPGIERPAIAFALPNPTGYTMMLDLGANVDCEPQHLLQFAEMGHALVAALEGKERPTIGLLNIGEEVIKGNETIKRAGELLRASTLNFRGNVEGNDIYKGTVDVIVCDGFVGNVALKTSEGLAQMLADIIKEEFSRSLLSKLMAILALPVLLRFKKRVDHRQYNGAALLGLRSLVIKSHGSADAYAFEWAIKRGYDAVKNGVLERLSRAMAENAAPLGESGRDANGAGQASPSAGQPAEPSAALSSKT</sequence>
<keyword id="KW-0963">Cytoplasm</keyword>
<keyword id="KW-0444">Lipid biosynthesis</keyword>
<keyword id="KW-0443">Lipid metabolism</keyword>
<keyword id="KW-0594">Phospholipid biosynthesis</keyword>
<keyword id="KW-1208">Phospholipid metabolism</keyword>
<keyword id="KW-0808">Transferase</keyword>
<accession>Q3JQ64</accession>
<gene>
    <name evidence="1" type="primary">plsX</name>
    <name type="ordered locus">BURPS1710b_2908</name>
</gene>
<proteinExistence type="inferred from homology"/>
<organism>
    <name type="scientific">Burkholderia pseudomallei (strain 1710b)</name>
    <dbReference type="NCBI Taxonomy" id="320372"/>
    <lineage>
        <taxon>Bacteria</taxon>
        <taxon>Pseudomonadati</taxon>
        <taxon>Pseudomonadota</taxon>
        <taxon>Betaproteobacteria</taxon>
        <taxon>Burkholderiales</taxon>
        <taxon>Burkholderiaceae</taxon>
        <taxon>Burkholderia</taxon>
        <taxon>pseudomallei group</taxon>
    </lineage>
</organism>
<name>PLSX_BURP1</name>
<evidence type="ECO:0000255" key="1">
    <source>
        <dbReference type="HAMAP-Rule" id="MF_00019"/>
    </source>
</evidence>
<evidence type="ECO:0000256" key="2">
    <source>
        <dbReference type="SAM" id="MobiDB-lite"/>
    </source>
</evidence>
<dbReference type="EC" id="2.3.1.274" evidence="1"/>
<dbReference type="EMBL" id="CP000124">
    <property type="protein sequence ID" value="ABA47609.1"/>
    <property type="molecule type" value="Genomic_DNA"/>
</dbReference>
<dbReference type="RefSeq" id="WP_004192749.1">
    <property type="nucleotide sequence ID" value="NC_007434.1"/>
</dbReference>
<dbReference type="SMR" id="Q3JQ64"/>
<dbReference type="EnsemblBacteria" id="ABA47609">
    <property type="protein sequence ID" value="ABA47609"/>
    <property type="gene ID" value="BURPS1710b_2908"/>
</dbReference>
<dbReference type="GeneID" id="93061023"/>
<dbReference type="KEGG" id="bpm:BURPS1710b_2908"/>
<dbReference type="HOGENOM" id="CLU_039379_1_0_4"/>
<dbReference type="UniPathway" id="UPA00085"/>
<dbReference type="Proteomes" id="UP000002700">
    <property type="component" value="Chromosome I"/>
</dbReference>
<dbReference type="GO" id="GO:0005737">
    <property type="term" value="C:cytoplasm"/>
    <property type="evidence" value="ECO:0007669"/>
    <property type="project" value="UniProtKB-SubCell"/>
</dbReference>
<dbReference type="GO" id="GO:0043811">
    <property type="term" value="F:phosphate:acyl-[acyl carrier protein] acyltransferase activity"/>
    <property type="evidence" value="ECO:0007669"/>
    <property type="project" value="UniProtKB-UniRule"/>
</dbReference>
<dbReference type="GO" id="GO:0006633">
    <property type="term" value="P:fatty acid biosynthetic process"/>
    <property type="evidence" value="ECO:0007669"/>
    <property type="project" value="UniProtKB-UniRule"/>
</dbReference>
<dbReference type="GO" id="GO:0008654">
    <property type="term" value="P:phospholipid biosynthetic process"/>
    <property type="evidence" value="ECO:0007669"/>
    <property type="project" value="UniProtKB-KW"/>
</dbReference>
<dbReference type="Gene3D" id="3.40.718.10">
    <property type="entry name" value="Isopropylmalate Dehydrogenase"/>
    <property type="match status" value="1"/>
</dbReference>
<dbReference type="HAMAP" id="MF_00019">
    <property type="entry name" value="PlsX"/>
    <property type="match status" value="1"/>
</dbReference>
<dbReference type="InterPro" id="IPR003664">
    <property type="entry name" value="FA_synthesis"/>
</dbReference>
<dbReference type="InterPro" id="IPR012281">
    <property type="entry name" value="Phospholipid_synth_PlsX-like"/>
</dbReference>
<dbReference type="NCBIfam" id="TIGR00182">
    <property type="entry name" value="plsX"/>
    <property type="match status" value="1"/>
</dbReference>
<dbReference type="PANTHER" id="PTHR30100">
    <property type="entry name" value="FATTY ACID/PHOSPHOLIPID SYNTHESIS PROTEIN PLSX"/>
    <property type="match status" value="1"/>
</dbReference>
<dbReference type="PANTHER" id="PTHR30100:SF1">
    <property type="entry name" value="PHOSPHATE ACYLTRANSFERASE"/>
    <property type="match status" value="1"/>
</dbReference>
<dbReference type="Pfam" id="PF02504">
    <property type="entry name" value="FA_synthesis"/>
    <property type="match status" value="1"/>
</dbReference>
<dbReference type="PIRSF" id="PIRSF002465">
    <property type="entry name" value="Phsphlp_syn_PlsX"/>
    <property type="match status" value="1"/>
</dbReference>
<dbReference type="SUPFAM" id="SSF53659">
    <property type="entry name" value="Isocitrate/Isopropylmalate dehydrogenase-like"/>
    <property type="match status" value="1"/>
</dbReference>
<comment type="function">
    <text evidence="1">Catalyzes the reversible formation of acyl-phosphate (acyl-PO(4)) from acyl-[acyl-carrier-protein] (acyl-ACP). This enzyme utilizes acyl-ACP as fatty acyl donor, but not acyl-CoA.</text>
</comment>
<comment type="catalytic activity">
    <reaction evidence="1">
        <text>a fatty acyl-[ACP] + phosphate = an acyl phosphate + holo-[ACP]</text>
        <dbReference type="Rhea" id="RHEA:42292"/>
        <dbReference type="Rhea" id="RHEA-COMP:9685"/>
        <dbReference type="Rhea" id="RHEA-COMP:14125"/>
        <dbReference type="ChEBI" id="CHEBI:43474"/>
        <dbReference type="ChEBI" id="CHEBI:59918"/>
        <dbReference type="ChEBI" id="CHEBI:64479"/>
        <dbReference type="ChEBI" id="CHEBI:138651"/>
        <dbReference type="EC" id="2.3.1.274"/>
    </reaction>
</comment>
<comment type="pathway">
    <text evidence="1">Lipid metabolism; phospholipid metabolism.</text>
</comment>
<comment type="subunit">
    <text evidence="1">Homodimer. Probably interacts with PlsY.</text>
</comment>
<comment type="subcellular location">
    <subcellularLocation>
        <location evidence="1">Cytoplasm</location>
    </subcellularLocation>
    <text evidence="1">Associated with the membrane possibly through PlsY.</text>
</comment>
<comment type="similarity">
    <text evidence="1">Belongs to the PlsX family.</text>
</comment>
<protein>
    <recommendedName>
        <fullName evidence="1">Phosphate acyltransferase</fullName>
        <ecNumber evidence="1">2.3.1.274</ecNumber>
    </recommendedName>
    <alternativeName>
        <fullName evidence="1">Acyl-ACP phosphotransacylase</fullName>
    </alternativeName>
    <alternativeName>
        <fullName evidence="1">Acyl-[acyl-carrier-protein]--phosphate acyltransferase</fullName>
    </alternativeName>
    <alternativeName>
        <fullName evidence="1">Phosphate-acyl-ACP acyltransferase</fullName>
    </alternativeName>
</protein>
<feature type="chain" id="PRO_1000001733" description="Phosphate acyltransferase">
    <location>
        <begin position="1"/>
        <end position="368"/>
    </location>
</feature>
<feature type="region of interest" description="Disordered" evidence="2">
    <location>
        <begin position="334"/>
        <end position="368"/>
    </location>
</feature>